<comment type="function">
    <text evidence="1">Catalyzes the formation of S-adenosylmethionine (AdoMet) from methionine and ATP. The overall synthetic reaction is composed of two sequential steps, AdoMet formation and the subsequent tripolyphosphate hydrolysis which occurs prior to release of AdoMet from the enzyme.</text>
</comment>
<comment type="catalytic activity">
    <reaction evidence="1">
        <text>L-methionine + ATP + H2O = S-adenosyl-L-methionine + phosphate + diphosphate</text>
        <dbReference type="Rhea" id="RHEA:21080"/>
        <dbReference type="ChEBI" id="CHEBI:15377"/>
        <dbReference type="ChEBI" id="CHEBI:30616"/>
        <dbReference type="ChEBI" id="CHEBI:33019"/>
        <dbReference type="ChEBI" id="CHEBI:43474"/>
        <dbReference type="ChEBI" id="CHEBI:57844"/>
        <dbReference type="ChEBI" id="CHEBI:59789"/>
        <dbReference type="EC" id="2.5.1.6"/>
    </reaction>
</comment>
<comment type="cofactor">
    <cofactor evidence="1">
        <name>Mg(2+)</name>
        <dbReference type="ChEBI" id="CHEBI:18420"/>
    </cofactor>
    <text evidence="1">Binds 2 divalent ions per subunit.</text>
</comment>
<comment type="cofactor">
    <cofactor evidence="1">
        <name>K(+)</name>
        <dbReference type="ChEBI" id="CHEBI:29103"/>
    </cofactor>
    <text evidence="1">Binds 1 potassium ion per subunit.</text>
</comment>
<comment type="pathway">
    <text evidence="1">Amino-acid biosynthesis; S-adenosyl-L-methionine biosynthesis; S-adenosyl-L-methionine from L-methionine: step 1/1.</text>
</comment>
<comment type="subunit">
    <text evidence="1">Homotetramer; dimer of dimers.</text>
</comment>
<comment type="subcellular location">
    <subcellularLocation>
        <location evidence="1">Cytoplasm</location>
    </subcellularLocation>
</comment>
<comment type="similarity">
    <text evidence="1">Belongs to the AdoMet synthase family.</text>
</comment>
<reference key="1">
    <citation type="submission" date="2006-08" db="EMBL/GenBank/DDBJ databases">
        <title>Complete sequence of Shewanella sp. MR-4.</title>
        <authorList>
            <consortium name="US DOE Joint Genome Institute"/>
            <person name="Copeland A."/>
            <person name="Lucas S."/>
            <person name="Lapidus A."/>
            <person name="Barry K."/>
            <person name="Detter J.C."/>
            <person name="Glavina del Rio T."/>
            <person name="Hammon N."/>
            <person name="Israni S."/>
            <person name="Dalin E."/>
            <person name="Tice H."/>
            <person name="Pitluck S."/>
            <person name="Kiss H."/>
            <person name="Brettin T."/>
            <person name="Bruce D."/>
            <person name="Han C."/>
            <person name="Tapia R."/>
            <person name="Gilna P."/>
            <person name="Schmutz J."/>
            <person name="Larimer F."/>
            <person name="Land M."/>
            <person name="Hauser L."/>
            <person name="Kyrpides N."/>
            <person name="Mikhailova N."/>
            <person name="Nealson K."/>
            <person name="Konstantinidis K."/>
            <person name="Klappenbach J."/>
            <person name="Tiedje J."/>
            <person name="Richardson P."/>
        </authorList>
    </citation>
    <scope>NUCLEOTIDE SEQUENCE [LARGE SCALE GENOMIC DNA]</scope>
    <source>
        <strain>MR-4</strain>
    </source>
</reference>
<gene>
    <name evidence="1" type="primary">metK</name>
    <name type="ordered locus">Shewmr4_0772</name>
</gene>
<keyword id="KW-0067">ATP-binding</keyword>
<keyword id="KW-0963">Cytoplasm</keyword>
<keyword id="KW-0460">Magnesium</keyword>
<keyword id="KW-0479">Metal-binding</keyword>
<keyword id="KW-0547">Nucleotide-binding</keyword>
<keyword id="KW-0554">One-carbon metabolism</keyword>
<keyword id="KW-0630">Potassium</keyword>
<keyword id="KW-0808">Transferase</keyword>
<name>METK_SHESM</name>
<sequence length="383" mass="41366">MAKHLFTSESVSEGHPDKIADQISDAVLDAILAQDPKARVACETYVKTGMVLVGGEVTTSAWVDIEELTRKTVREIGYVHSDMGFDADSCAVLNAIGKQSPDINQGVDRADPKEQGAGDQGLMFGYASNETDILMPAPITYAHALVKRQSEVRKDGTLPWLRPDAKSQVTFAYEDNKIVGIDAIVLSTQHSPDIAQADLIEGVMETIIKPVLPAQWLNKDTKYFINPTGRFVIGGPMGDCGLTGRKIIVDTYGGMARHGGGAFSGKDPSKVDRSAAYAARYVAKNIVAAGLADRCEIQVSYAIGVAEPTSISVETFGTGKVSEEVLIKLVRQHFDLRPYGLTEMLNLARPIYQATAAYGHFGRNEFPWEATDKADALRADAGL</sequence>
<protein>
    <recommendedName>
        <fullName evidence="1">S-adenosylmethionine synthase</fullName>
        <shortName evidence="1">AdoMet synthase</shortName>
        <ecNumber evidence="1">2.5.1.6</ecNumber>
    </recommendedName>
    <alternativeName>
        <fullName evidence="1">MAT</fullName>
    </alternativeName>
    <alternativeName>
        <fullName evidence="1">Methionine adenosyltransferase</fullName>
    </alternativeName>
</protein>
<evidence type="ECO:0000255" key="1">
    <source>
        <dbReference type="HAMAP-Rule" id="MF_00086"/>
    </source>
</evidence>
<accession>Q0HM65</accession>
<organism>
    <name type="scientific">Shewanella sp. (strain MR-4)</name>
    <dbReference type="NCBI Taxonomy" id="60480"/>
    <lineage>
        <taxon>Bacteria</taxon>
        <taxon>Pseudomonadati</taxon>
        <taxon>Pseudomonadota</taxon>
        <taxon>Gammaproteobacteria</taxon>
        <taxon>Alteromonadales</taxon>
        <taxon>Shewanellaceae</taxon>
        <taxon>Shewanella</taxon>
    </lineage>
</organism>
<feature type="chain" id="PRO_0000302979" description="S-adenosylmethionine synthase">
    <location>
        <begin position="1"/>
        <end position="383"/>
    </location>
</feature>
<feature type="region of interest" description="Flexible loop" evidence="1">
    <location>
        <begin position="99"/>
        <end position="109"/>
    </location>
</feature>
<feature type="binding site" description="in other chain" evidence="1">
    <location>
        <position position="15"/>
    </location>
    <ligand>
        <name>ATP</name>
        <dbReference type="ChEBI" id="CHEBI:30616"/>
        <note>ligand shared between two neighboring subunits</note>
    </ligand>
</feature>
<feature type="binding site" evidence="1">
    <location>
        <position position="17"/>
    </location>
    <ligand>
        <name>Mg(2+)</name>
        <dbReference type="ChEBI" id="CHEBI:18420"/>
    </ligand>
</feature>
<feature type="binding site" evidence="1">
    <location>
        <position position="43"/>
    </location>
    <ligand>
        <name>K(+)</name>
        <dbReference type="ChEBI" id="CHEBI:29103"/>
    </ligand>
</feature>
<feature type="binding site" description="in other chain" evidence="1">
    <location>
        <position position="56"/>
    </location>
    <ligand>
        <name>L-methionine</name>
        <dbReference type="ChEBI" id="CHEBI:57844"/>
        <note>ligand shared between two neighboring subunits</note>
    </ligand>
</feature>
<feature type="binding site" description="in other chain" evidence="1">
    <location>
        <position position="99"/>
    </location>
    <ligand>
        <name>L-methionine</name>
        <dbReference type="ChEBI" id="CHEBI:57844"/>
        <note>ligand shared between two neighboring subunits</note>
    </ligand>
</feature>
<feature type="binding site" description="in other chain" evidence="1">
    <location>
        <begin position="164"/>
        <end position="166"/>
    </location>
    <ligand>
        <name>ATP</name>
        <dbReference type="ChEBI" id="CHEBI:30616"/>
        <note>ligand shared between two neighboring subunits</note>
    </ligand>
</feature>
<feature type="binding site" description="in other chain" evidence="1">
    <location>
        <begin position="230"/>
        <end position="231"/>
    </location>
    <ligand>
        <name>ATP</name>
        <dbReference type="ChEBI" id="CHEBI:30616"/>
        <note>ligand shared between two neighboring subunits</note>
    </ligand>
</feature>
<feature type="binding site" evidence="1">
    <location>
        <position position="239"/>
    </location>
    <ligand>
        <name>ATP</name>
        <dbReference type="ChEBI" id="CHEBI:30616"/>
        <note>ligand shared between two neighboring subunits</note>
    </ligand>
</feature>
<feature type="binding site" evidence="1">
    <location>
        <position position="239"/>
    </location>
    <ligand>
        <name>L-methionine</name>
        <dbReference type="ChEBI" id="CHEBI:57844"/>
        <note>ligand shared between two neighboring subunits</note>
    </ligand>
</feature>
<feature type="binding site" description="in other chain" evidence="1">
    <location>
        <begin position="245"/>
        <end position="246"/>
    </location>
    <ligand>
        <name>ATP</name>
        <dbReference type="ChEBI" id="CHEBI:30616"/>
        <note>ligand shared between two neighboring subunits</note>
    </ligand>
</feature>
<feature type="binding site" evidence="1">
    <location>
        <position position="262"/>
    </location>
    <ligand>
        <name>ATP</name>
        <dbReference type="ChEBI" id="CHEBI:30616"/>
        <note>ligand shared between two neighboring subunits</note>
    </ligand>
</feature>
<feature type="binding site" evidence="1">
    <location>
        <position position="266"/>
    </location>
    <ligand>
        <name>ATP</name>
        <dbReference type="ChEBI" id="CHEBI:30616"/>
        <note>ligand shared between two neighboring subunits</note>
    </ligand>
</feature>
<feature type="binding site" description="in other chain" evidence="1">
    <location>
        <position position="270"/>
    </location>
    <ligand>
        <name>L-methionine</name>
        <dbReference type="ChEBI" id="CHEBI:57844"/>
        <note>ligand shared between two neighboring subunits</note>
    </ligand>
</feature>
<dbReference type="EC" id="2.5.1.6" evidence="1"/>
<dbReference type="EMBL" id="CP000446">
    <property type="protein sequence ID" value="ABI37852.1"/>
    <property type="molecule type" value="Genomic_DNA"/>
</dbReference>
<dbReference type="RefSeq" id="WP_011621567.1">
    <property type="nucleotide sequence ID" value="NC_008321.1"/>
</dbReference>
<dbReference type="SMR" id="Q0HM65"/>
<dbReference type="GeneID" id="94729279"/>
<dbReference type="KEGG" id="she:Shewmr4_0772"/>
<dbReference type="HOGENOM" id="CLU_041802_1_1_6"/>
<dbReference type="UniPathway" id="UPA00315">
    <property type="reaction ID" value="UER00080"/>
</dbReference>
<dbReference type="GO" id="GO:0005737">
    <property type="term" value="C:cytoplasm"/>
    <property type="evidence" value="ECO:0007669"/>
    <property type="project" value="UniProtKB-SubCell"/>
</dbReference>
<dbReference type="GO" id="GO:0005524">
    <property type="term" value="F:ATP binding"/>
    <property type="evidence" value="ECO:0007669"/>
    <property type="project" value="UniProtKB-UniRule"/>
</dbReference>
<dbReference type="GO" id="GO:0000287">
    <property type="term" value="F:magnesium ion binding"/>
    <property type="evidence" value="ECO:0007669"/>
    <property type="project" value="UniProtKB-UniRule"/>
</dbReference>
<dbReference type="GO" id="GO:0004478">
    <property type="term" value="F:methionine adenosyltransferase activity"/>
    <property type="evidence" value="ECO:0007669"/>
    <property type="project" value="UniProtKB-UniRule"/>
</dbReference>
<dbReference type="GO" id="GO:0006730">
    <property type="term" value="P:one-carbon metabolic process"/>
    <property type="evidence" value="ECO:0007669"/>
    <property type="project" value="UniProtKB-KW"/>
</dbReference>
<dbReference type="GO" id="GO:0006556">
    <property type="term" value="P:S-adenosylmethionine biosynthetic process"/>
    <property type="evidence" value="ECO:0007669"/>
    <property type="project" value="UniProtKB-UniRule"/>
</dbReference>
<dbReference type="CDD" id="cd18079">
    <property type="entry name" value="S-AdoMet_synt"/>
    <property type="match status" value="1"/>
</dbReference>
<dbReference type="FunFam" id="3.30.300.10:FF:000001">
    <property type="entry name" value="S-adenosylmethionine synthase"/>
    <property type="match status" value="1"/>
</dbReference>
<dbReference type="FunFam" id="3.30.300.10:FF:000003">
    <property type="entry name" value="S-adenosylmethionine synthase"/>
    <property type="match status" value="1"/>
</dbReference>
<dbReference type="FunFam" id="3.30.300.10:FF:000004">
    <property type="entry name" value="S-adenosylmethionine synthase"/>
    <property type="match status" value="1"/>
</dbReference>
<dbReference type="Gene3D" id="3.30.300.10">
    <property type="match status" value="3"/>
</dbReference>
<dbReference type="HAMAP" id="MF_00086">
    <property type="entry name" value="S_AdoMet_synth1"/>
    <property type="match status" value="1"/>
</dbReference>
<dbReference type="InterPro" id="IPR022631">
    <property type="entry name" value="ADOMET_SYNTHASE_CS"/>
</dbReference>
<dbReference type="InterPro" id="IPR022630">
    <property type="entry name" value="S-AdoMet_synt_C"/>
</dbReference>
<dbReference type="InterPro" id="IPR022629">
    <property type="entry name" value="S-AdoMet_synt_central"/>
</dbReference>
<dbReference type="InterPro" id="IPR022628">
    <property type="entry name" value="S-AdoMet_synt_N"/>
</dbReference>
<dbReference type="InterPro" id="IPR002133">
    <property type="entry name" value="S-AdoMet_synthetase"/>
</dbReference>
<dbReference type="InterPro" id="IPR022636">
    <property type="entry name" value="S-AdoMet_synthetase_sfam"/>
</dbReference>
<dbReference type="NCBIfam" id="TIGR01034">
    <property type="entry name" value="metK"/>
    <property type="match status" value="1"/>
</dbReference>
<dbReference type="PANTHER" id="PTHR11964">
    <property type="entry name" value="S-ADENOSYLMETHIONINE SYNTHETASE"/>
    <property type="match status" value="1"/>
</dbReference>
<dbReference type="Pfam" id="PF02773">
    <property type="entry name" value="S-AdoMet_synt_C"/>
    <property type="match status" value="1"/>
</dbReference>
<dbReference type="Pfam" id="PF02772">
    <property type="entry name" value="S-AdoMet_synt_M"/>
    <property type="match status" value="1"/>
</dbReference>
<dbReference type="Pfam" id="PF00438">
    <property type="entry name" value="S-AdoMet_synt_N"/>
    <property type="match status" value="1"/>
</dbReference>
<dbReference type="PIRSF" id="PIRSF000497">
    <property type="entry name" value="MAT"/>
    <property type="match status" value="1"/>
</dbReference>
<dbReference type="SUPFAM" id="SSF55973">
    <property type="entry name" value="S-adenosylmethionine synthetase"/>
    <property type="match status" value="3"/>
</dbReference>
<dbReference type="PROSITE" id="PS00376">
    <property type="entry name" value="ADOMET_SYNTHASE_1"/>
    <property type="match status" value="1"/>
</dbReference>
<dbReference type="PROSITE" id="PS00377">
    <property type="entry name" value="ADOMET_SYNTHASE_2"/>
    <property type="match status" value="1"/>
</dbReference>
<proteinExistence type="inferred from homology"/>